<name>U512P_DICDI</name>
<gene>
    <name type="ORF">DDB_G0279293</name>
</gene>
<organism>
    <name type="scientific">Dictyostelium discoideum</name>
    <name type="common">Social amoeba</name>
    <dbReference type="NCBI Taxonomy" id="44689"/>
    <lineage>
        <taxon>Eukaryota</taxon>
        <taxon>Amoebozoa</taxon>
        <taxon>Evosea</taxon>
        <taxon>Eumycetozoa</taxon>
        <taxon>Dictyostelia</taxon>
        <taxon>Dictyosteliales</taxon>
        <taxon>Dictyosteliaceae</taxon>
        <taxon>Dictyostelium</taxon>
    </lineage>
</organism>
<protein>
    <recommendedName>
        <fullName>UPF0512 protein P</fullName>
    </recommendedName>
</protein>
<reference key="1">
    <citation type="journal article" date="2005" name="Nature">
        <title>The genome of the social amoeba Dictyostelium discoideum.</title>
        <authorList>
            <person name="Eichinger L."/>
            <person name="Pachebat J.A."/>
            <person name="Gloeckner G."/>
            <person name="Rajandream M.A."/>
            <person name="Sucgang R."/>
            <person name="Berriman M."/>
            <person name="Song J."/>
            <person name="Olsen R."/>
            <person name="Szafranski K."/>
            <person name="Xu Q."/>
            <person name="Tunggal B."/>
            <person name="Kummerfeld S."/>
            <person name="Madera M."/>
            <person name="Konfortov B.A."/>
            <person name="Rivero F."/>
            <person name="Bankier A.T."/>
            <person name="Lehmann R."/>
            <person name="Hamlin N."/>
            <person name="Davies R."/>
            <person name="Gaudet P."/>
            <person name="Fey P."/>
            <person name="Pilcher K."/>
            <person name="Chen G."/>
            <person name="Saunders D."/>
            <person name="Sodergren E.J."/>
            <person name="Davis P."/>
            <person name="Kerhornou A."/>
            <person name="Nie X."/>
            <person name="Hall N."/>
            <person name="Anjard C."/>
            <person name="Hemphill L."/>
            <person name="Bason N."/>
            <person name="Farbrother P."/>
            <person name="Desany B."/>
            <person name="Just E."/>
            <person name="Morio T."/>
            <person name="Rost R."/>
            <person name="Churcher C.M."/>
            <person name="Cooper J."/>
            <person name="Haydock S."/>
            <person name="van Driessche N."/>
            <person name="Cronin A."/>
            <person name="Goodhead I."/>
            <person name="Muzny D.M."/>
            <person name="Mourier T."/>
            <person name="Pain A."/>
            <person name="Lu M."/>
            <person name="Harper D."/>
            <person name="Lindsay R."/>
            <person name="Hauser H."/>
            <person name="James K.D."/>
            <person name="Quiles M."/>
            <person name="Madan Babu M."/>
            <person name="Saito T."/>
            <person name="Buchrieser C."/>
            <person name="Wardroper A."/>
            <person name="Felder M."/>
            <person name="Thangavelu M."/>
            <person name="Johnson D."/>
            <person name="Knights A."/>
            <person name="Loulseged H."/>
            <person name="Mungall K.L."/>
            <person name="Oliver K."/>
            <person name="Price C."/>
            <person name="Quail M.A."/>
            <person name="Urushihara H."/>
            <person name="Hernandez J."/>
            <person name="Rabbinowitsch E."/>
            <person name="Steffen D."/>
            <person name="Sanders M."/>
            <person name="Ma J."/>
            <person name="Kohara Y."/>
            <person name="Sharp S."/>
            <person name="Simmonds M.N."/>
            <person name="Spiegler S."/>
            <person name="Tivey A."/>
            <person name="Sugano S."/>
            <person name="White B."/>
            <person name="Walker D."/>
            <person name="Woodward J.R."/>
            <person name="Winckler T."/>
            <person name="Tanaka Y."/>
            <person name="Shaulsky G."/>
            <person name="Schleicher M."/>
            <person name="Weinstock G.M."/>
            <person name="Rosenthal A."/>
            <person name="Cox E.C."/>
            <person name="Chisholm R.L."/>
            <person name="Gibbs R.A."/>
            <person name="Loomis W.F."/>
            <person name="Platzer M."/>
            <person name="Kay R.R."/>
            <person name="Williams J.G."/>
            <person name="Dear P.H."/>
            <person name="Noegel A.A."/>
            <person name="Barrell B.G."/>
            <person name="Kuspa A."/>
        </authorList>
    </citation>
    <scope>NUCLEOTIDE SEQUENCE [LARGE SCALE GENOMIC DNA]</scope>
    <source>
        <strain>AX4</strain>
    </source>
</reference>
<sequence>MTIFNSISSISNSTRITSSSISTYNYNGSMANVNSTACFDNDFGGWGGLGGFNNGCGGCGGGSNVNVINFDIDIGRRHRRCC</sequence>
<dbReference type="EMBL" id="AAFI02000030">
    <property type="protein sequence ID" value="EAL67795.1"/>
    <property type="molecule type" value="Genomic_DNA"/>
</dbReference>
<dbReference type="RefSeq" id="XP_641776.1">
    <property type="nucleotide sequence ID" value="XM_636684.1"/>
</dbReference>
<dbReference type="FunCoup" id="Q54X01">
    <property type="interactions" value="640"/>
</dbReference>
<dbReference type="PaxDb" id="44689-DDB0266551"/>
<dbReference type="EnsemblProtists" id="EAL67795">
    <property type="protein sequence ID" value="EAL67795"/>
    <property type="gene ID" value="DDB_G0279293"/>
</dbReference>
<dbReference type="GeneID" id="8621973"/>
<dbReference type="KEGG" id="ddi:DDB_G0279293"/>
<dbReference type="dictyBase" id="DDB_G0279293"/>
<dbReference type="HOGENOM" id="CLU_194865_0_0_1"/>
<dbReference type="InParanoid" id="Q54X01"/>
<dbReference type="PhylomeDB" id="Q54X01"/>
<dbReference type="PRO" id="PR:Q54X01"/>
<dbReference type="Proteomes" id="UP000002195">
    <property type="component" value="Chromosome 3"/>
</dbReference>
<dbReference type="InterPro" id="IPR008455">
    <property type="entry name" value="HssA/B-related"/>
</dbReference>
<dbReference type="Pfam" id="PF05710">
    <property type="entry name" value="Coiled"/>
    <property type="match status" value="1"/>
</dbReference>
<accession>Q54X01</accession>
<proteinExistence type="inferred from homology"/>
<keyword id="KW-1185">Reference proteome</keyword>
<evidence type="ECO:0000305" key="1"/>
<feature type="chain" id="PRO_0000317354" description="UPF0512 protein P">
    <location>
        <begin position="1"/>
        <end position="82"/>
    </location>
</feature>
<comment type="similarity">
    <text evidence="1">Belongs to the UPF0512 family.</text>
</comment>